<organism>
    <name type="scientific">Helicobacter pylori (strain P12)</name>
    <dbReference type="NCBI Taxonomy" id="570508"/>
    <lineage>
        <taxon>Bacteria</taxon>
        <taxon>Pseudomonadati</taxon>
        <taxon>Campylobacterota</taxon>
        <taxon>Epsilonproteobacteria</taxon>
        <taxon>Campylobacterales</taxon>
        <taxon>Helicobacteraceae</taxon>
        <taxon>Helicobacter</taxon>
    </lineage>
</organism>
<name>LEPA_HELP2</name>
<feature type="chain" id="PRO_1000117027" description="Elongation factor 4">
    <location>
        <begin position="1"/>
        <end position="604"/>
    </location>
</feature>
<feature type="domain" description="tr-type G">
    <location>
        <begin position="10"/>
        <end position="191"/>
    </location>
</feature>
<feature type="binding site" evidence="1">
    <location>
        <begin position="22"/>
        <end position="27"/>
    </location>
    <ligand>
        <name>GTP</name>
        <dbReference type="ChEBI" id="CHEBI:37565"/>
    </ligand>
</feature>
<feature type="binding site" evidence="1">
    <location>
        <begin position="138"/>
        <end position="141"/>
    </location>
    <ligand>
        <name>GTP</name>
        <dbReference type="ChEBI" id="CHEBI:37565"/>
    </ligand>
</feature>
<accession>B6JKS8</accession>
<dbReference type="EC" id="3.6.5.n1" evidence="1"/>
<dbReference type="EMBL" id="CP001217">
    <property type="protein sequence ID" value="ACJ07506.1"/>
    <property type="molecule type" value="Genomic_DNA"/>
</dbReference>
<dbReference type="SMR" id="B6JKS8"/>
<dbReference type="KEGG" id="hpp:HPP12_0349"/>
<dbReference type="HOGENOM" id="CLU_009995_3_3_7"/>
<dbReference type="Proteomes" id="UP000008198">
    <property type="component" value="Chromosome"/>
</dbReference>
<dbReference type="GO" id="GO:0005886">
    <property type="term" value="C:plasma membrane"/>
    <property type="evidence" value="ECO:0007669"/>
    <property type="project" value="UniProtKB-SubCell"/>
</dbReference>
<dbReference type="GO" id="GO:0005525">
    <property type="term" value="F:GTP binding"/>
    <property type="evidence" value="ECO:0007669"/>
    <property type="project" value="UniProtKB-UniRule"/>
</dbReference>
<dbReference type="GO" id="GO:0003924">
    <property type="term" value="F:GTPase activity"/>
    <property type="evidence" value="ECO:0007669"/>
    <property type="project" value="UniProtKB-UniRule"/>
</dbReference>
<dbReference type="GO" id="GO:0043022">
    <property type="term" value="F:ribosome binding"/>
    <property type="evidence" value="ECO:0007669"/>
    <property type="project" value="UniProtKB-UniRule"/>
</dbReference>
<dbReference type="GO" id="GO:0003746">
    <property type="term" value="F:translation elongation factor activity"/>
    <property type="evidence" value="ECO:0007669"/>
    <property type="project" value="UniProtKB-UniRule"/>
</dbReference>
<dbReference type="GO" id="GO:0045727">
    <property type="term" value="P:positive regulation of translation"/>
    <property type="evidence" value="ECO:0007669"/>
    <property type="project" value="UniProtKB-UniRule"/>
</dbReference>
<dbReference type="CDD" id="cd03699">
    <property type="entry name" value="EF4_II"/>
    <property type="match status" value="1"/>
</dbReference>
<dbReference type="CDD" id="cd16260">
    <property type="entry name" value="EF4_III"/>
    <property type="match status" value="1"/>
</dbReference>
<dbReference type="CDD" id="cd01890">
    <property type="entry name" value="LepA"/>
    <property type="match status" value="1"/>
</dbReference>
<dbReference type="CDD" id="cd03709">
    <property type="entry name" value="lepA_C"/>
    <property type="match status" value="1"/>
</dbReference>
<dbReference type="FunFam" id="3.40.50.300:FF:000078">
    <property type="entry name" value="Elongation factor 4"/>
    <property type="match status" value="1"/>
</dbReference>
<dbReference type="FunFam" id="3.30.70.240:FF:000007">
    <property type="entry name" value="Translation factor GUF1, mitochondrial"/>
    <property type="match status" value="1"/>
</dbReference>
<dbReference type="FunFam" id="3.30.70.2570:FF:000001">
    <property type="entry name" value="Translation factor GUF1, mitochondrial"/>
    <property type="match status" value="1"/>
</dbReference>
<dbReference type="FunFam" id="3.30.70.870:FF:000004">
    <property type="entry name" value="Translation factor GUF1, mitochondrial"/>
    <property type="match status" value="1"/>
</dbReference>
<dbReference type="Gene3D" id="3.30.70.240">
    <property type="match status" value="1"/>
</dbReference>
<dbReference type="Gene3D" id="3.30.70.2570">
    <property type="entry name" value="Elongation factor 4, C-terminal domain"/>
    <property type="match status" value="1"/>
</dbReference>
<dbReference type="Gene3D" id="3.30.70.870">
    <property type="entry name" value="Elongation Factor G (Translational Gtpase), domain 3"/>
    <property type="match status" value="1"/>
</dbReference>
<dbReference type="Gene3D" id="3.40.50.300">
    <property type="entry name" value="P-loop containing nucleotide triphosphate hydrolases"/>
    <property type="match status" value="1"/>
</dbReference>
<dbReference type="Gene3D" id="2.40.30.10">
    <property type="entry name" value="Translation factors"/>
    <property type="match status" value="1"/>
</dbReference>
<dbReference type="HAMAP" id="MF_00071">
    <property type="entry name" value="LepA"/>
    <property type="match status" value="1"/>
</dbReference>
<dbReference type="InterPro" id="IPR006297">
    <property type="entry name" value="EF-4"/>
</dbReference>
<dbReference type="InterPro" id="IPR035647">
    <property type="entry name" value="EFG_III/V"/>
</dbReference>
<dbReference type="InterPro" id="IPR000640">
    <property type="entry name" value="EFG_V-like"/>
</dbReference>
<dbReference type="InterPro" id="IPR004161">
    <property type="entry name" value="EFTu-like_2"/>
</dbReference>
<dbReference type="InterPro" id="IPR031157">
    <property type="entry name" value="G_TR_CS"/>
</dbReference>
<dbReference type="InterPro" id="IPR038363">
    <property type="entry name" value="LepA_C_sf"/>
</dbReference>
<dbReference type="InterPro" id="IPR013842">
    <property type="entry name" value="LepA_CTD"/>
</dbReference>
<dbReference type="InterPro" id="IPR035654">
    <property type="entry name" value="LepA_IV"/>
</dbReference>
<dbReference type="InterPro" id="IPR027417">
    <property type="entry name" value="P-loop_NTPase"/>
</dbReference>
<dbReference type="InterPro" id="IPR005225">
    <property type="entry name" value="Small_GTP-bd"/>
</dbReference>
<dbReference type="InterPro" id="IPR000795">
    <property type="entry name" value="T_Tr_GTP-bd_dom"/>
</dbReference>
<dbReference type="InterPro" id="IPR009000">
    <property type="entry name" value="Transl_B-barrel_sf"/>
</dbReference>
<dbReference type="NCBIfam" id="TIGR01393">
    <property type="entry name" value="lepA"/>
    <property type="match status" value="1"/>
</dbReference>
<dbReference type="NCBIfam" id="TIGR00231">
    <property type="entry name" value="small_GTP"/>
    <property type="match status" value="1"/>
</dbReference>
<dbReference type="PANTHER" id="PTHR43512:SF4">
    <property type="entry name" value="TRANSLATION FACTOR GUF1 HOMOLOG, CHLOROPLASTIC"/>
    <property type="match status" value="1"/>
</dbReference>
<dbReference type="PANTHER" id="PTHR43512">
    <property type="entry name" value="TRANSLATION FACTOR GUF1-RELATED"/>
    <property type="match status" value="1"/>
</dbReference>
<dbReference type="Pfam" id="PF00679">
    <property type="entry name" value="EFG_C"/>
    <property type="match status" value="1"/>
</dbReference>
<dbReference type="Pfam" id="PF00009">
    <property type="entry name" value="GTP_EFTU"/>
    <property type="match status" value="1"/>
</dbReference>
<dbReference type="Pfam" id="PF03144">
    <property type="entry name" value="GTP_EFTU_D2"/>
    <property type="match status" value="1"/>
</dbReference>
<dbReference type="Pfam" id="PF06421">
    <property type="entry name" value="LepA_C"/>
    <property type="match status" value="1"/>
</dbReference>
<dbReference type="PRINTS" id="PR00315">
    <property type="entry name" value="ELONGATNFCT"/>
</dbReference>
<dbReference type="SUPFAM" id="SSF54980">
    <property type="entry name" value="EF-G C-terminal domain-like"/>
    <property type="match status" value="2"/>
</dbReference>
<dbReference type="SUPFAM" id="SSF52540">
    <property type="entry name" value="P-loop containing nucleoside triphosphate hydrolases"/>
    <property type="match status" value="1"/>
</dbReference>
<dbReference type="SUPFAM" id="SSF50447">
    <property type="entry name" value="Translation proteins"/>
    <property type="match status" value="1"/>
</dbReference>
<dbReference type="PROSITE" id="PS00301">
    <property type="entry name" value="G_TR_1"/>
    <property type="match status" value="1"/>
</dbReference>
<dbReference type="PROSITE" id="PS51722">
    <property type="entry name" value="G_TR_2"/>
    <property type="match status" value="1"/>
</dbReference>
<comment type="function">
    <text evidence="1">Required for accurate and efficient protein synthesis under certain stress conditions. May act as a fidelity factor of the translation reaction, by catalyzing a one-codon backward translocation of tRNAs on improperly translocated ribosomes. Back-translocation proceeds from a post-translocation (POST) complex to a pre-translocation (PRE) complex, thus giving elongation factor G a second chance to translocate the tRNAs correctly. Binds to ribosomes in a GTP-dependent manner.</text>
</comment>
<comment type="catalytic activity">
    <reaction evidence="1">
        <text>GTP + H2O = GDP + phosphate + H(+)</text>
        <dbReference type="Rhea" id="RHEA:19669"/>
        <dbReference type="ChEBI" id="CHEBI:15377"/>
        <dbReference type="ChEBI" id="CHEBI:15378"/>
        <dbReference type="ChEBI" id="CHEBI:37565"/>
        <dbReference type="ChEBI" id="CHEBI:43474"/>
        <dbReference type="ChEBI" id="CHEBI:58189"/>
        <dbReference type="EC" id="3.6.5.n1"/>
    </reaction>
</comment>
<comment type="subcellular location">
    <subcellularLocation>
        <location evidence="1">Cell inner membrane</location>
        <topology evidence="1">Peripheral membrane protein</topology>
        <orientation evidence="1">Cytoplasmic side</orientation>
    </subcellularLocation>
</comment>
<comment type="similarity">
    <text evidence="1">Belongs to the TRAFAC class translation factor GTPase superfamily. Classic translation factor GTPase family. LepA subfamily.</text>
</comment>
<protein>
    <recommendedName>
        <fullName evidence="1">Elongation factor 4</fullName>
        <shortName evidence="1">EF-4</shortName>
        <ecNumber evidence="1">3.6.5.n1</ecNumber>
    </recommendedName>
    <alternativeName>
        <fullName evidence="1">Ribosomal back-translocase LepA</fullName>
    </alternativeName>
</protein>
<proteinExistence type="inferred from homology"/>
<reference key="1">
    <citation type="submission" date="2008-10" db="EMBL/GenBank/DDBJ databases">
        <title>The complete genome sequence of Helicobacter pylori strain P12.</title>
        <authorList>
            <person name="Fischer W."/>
            <person name="Windhager L."/>
            <person name="Karnholz A."/>
            <person name="Zeiller M."/>
            <person name="Zimmer R."/>
            <person name="Haas R."/>
        </authorList>
    </citation>
    <scope>NUCLEOTIDE SEQUENCE [LARGE SCALE GENOMIC DNA]</scope>
    <source>
        <strain>P12</strain>
    </source>
</reference>
<evidence type="ECO:0000255" key="1">
    <source>
        <dbReference type="HAMAP-Rule" id="MF_00071"/>
    </source>
</evidence>
<sequence length="604" mass="67056">MKEKTPTPMKNIRNFSIIAHIDHGKSTLADCLIAECNAISNREMTSQVMDTMDIEKERGITIKAQSVRLNYTFKGEDYVLNLIDTPGHVDFSYEVSRSLCSCEGALLVVDATQGVEAQTIANTYIALDNNLEILPVINKIDLPNANVLEIKQDIEDTIGIDCSNANEVSAKAKLGIKDLLEKIITTIPAPSGDPNAPLKALIYDSWFDNYLGALALVRIMDGSINTEQEILVMGTGKKHGVLGLYYPNPLKKIPTKSLECGEIGIVSLGLKSVTDIAVGDTLTDAKNPTPKPIEGFMPAKPFVFAGLYPIETDRFEDLREALLKLQLNDCALNFEPESSVALGFGFRVGFLGLLHMEVIKERLEREFGLNLIATAPTVVYEVHLTDNSIKYVQNPSELPPENHIACIKEPFVRATIITPSEFLGNLMQLLNNKRGIQEKMEYLNQSRVMLTYSLPSNEIVMDFYDKLKSCTKGYASFDYEPIENREAHLVKLDVRVAGDVVDALSIIIDKNKAYEKGRALVETMKELIPRQLFEVAIQASVGNKIIARETIKSVGKNVTAKCYGGDITRKRKLLEKQKEGKKRMKAIGKVELPQEAFLAILKID</sequence>
<gene>
    <name evidence="1" type="primary">lepA</name>
    <name type="ordered locus">HPP12_0349</name>
</gene>
<keyword id="KW-0997">Cell inner membrane</keyword>
<keyword id="KW-1003">Cell membrane</keyword>
<keyword id="KW-0342">GTP-binding</keyword>
<keyword id="KW-0378">Hydrolase</keyword>
<keyword id="KW-0472">Membrane</keyword>
<keyword id="KW-0547">Nucleotide-binding</keyword>
<keyword id="KW-0648">Protein biosynthesis</keyword>